<name>SELO_PSEAE</name>
<sequence length="486" mass="55044">MKSLDDLDFDNRFARLGGAFSTEVLPDPIAEPRLVVASPAALALLDLPAETSDEALFAELFGGHKLWSEAEPRAMVYSGHQFGSYNPRLGDGRGLLLGEVINQAGEHWDLHLKGAGQTPYSRMGDGRAVLRSSIREFLASEALPALGIPSSRALCVIGSSTPVWREKKESAATLLRLAPSHVRFGHFEYFYYTRQHDQLKQLAAFVLEHHFADCNAAERPYAAMFRQVVERNAELIARWQAYGFCHGVMNTDNMSILGITFDYGPYAFLDDFDANHICNHSDDAGRYSFSNQVPIAHWNLAALAQALTPLVEVDELRASLDLFLPLYQAHYLDLMRRRLGLGVAAENDHALVQELLQRMQGSAVDYSLFFRRLGEETPERALASLRDDFVDREAFDRWAEAYRRRVEEEGGDQESRRRRMHAVNPLYVLRNYLAQQAIEAAEQGDYTEVRLLHQVLSRPFEEQPGMERFTRRPPDWGRHLEISCSS</sequence>
<comment type="function">
    <text evidence="1">Nucleotidyltransferase involved in the post-translational modification of proteins. It can catalyze the addition of adenosine monophosphate (AMP) or uridine monophosphate (UMP) to a protein, resulting in modifications known as AMPylation and UMPylation.</text>
</comment>
<comment type="catalytic activity">
    <reaction evidence="1">
        <text>L-seryl-[protein] + ATP = 3-O-(5'-adenylyl)-L-seryl-[protein] + diphosphate</text>
        <dbReference type="Rhea" id="RHEA:58120"/>
        <dbReference type="Rhea" id="RHEA-COMP:9863"/>
        <dbReference type="Rhea" id="RHEA-COMP:15073"/>
        <dbReference type="ChEBI" id="CHEBI:29999"/>
        <dbReference type="ChEBI" id="CHEBI:30616"/>
        <dbReference type="ChEBI" id="CHEBI:33019"/>
        <dbReference type="ChEBI" id="CHEBI:142516"/>
        <dbReference type="EC" id="2.7.7.108"/>
    </reaction>
</comment>
<comment type="catalytic activity">
    <reaction evidence="1">
        <text>L-threonyl-[protein] + ATP = 3-O-(5'-adenylyl)-L-threonyl-[protein] + diphosphate</text>
        <dbReference type="Rhea" id="RHEA:54292"/>
        <dbReference type="Rhea" id="RHEA-COMP:11060"/>
        <dbReference type="Rhea" id="RHEA-COMP:13847"/>
        <dbReference type="ChEBI" id="CHEBI:30013"/>
        <dbReference type="ChEBI" id="CHEBI:30616"/>
        <dbReference type="ChEBI" id="CHEBI:33019"/>
        <dbReference type="ChEBI" id="CHEBI:138113"/>
        <dbReference type="EC" id="2.7.7.108"/>
    </reaction>
</comment>
<comment type="catalytic activity">
    <reaction evidence="1">
        <text>L-tyrosyl-[protein] + ATP = O-(5'-adenylyl)-L-tyrosyl-[protein] + diphosphate</text>
        <dbReference type="Rhea" id="RHEA:54288"/>
        <dbReference type="Rhea" id="RHEA-COMP:10136"/>
        <dbReference type="Rhea" id="RHEA-COMP:13846"/>
        <dbReference type="ChEBI" id="CHEBI:30616"/>
        <dbReference type="ChEBI" id="CHEBI:33019"/>
        <dbReference type="ChEBI" id="CHEBI:46858"/>
        <dbReference type="ChEBI" id="CHEBI:83624"/>
        <dbReference type="EC" id="2.7.7.108"/>
    </reaction>
</comment>
<comment type="catalytic activity">
    <reaction evidence="1">
        <text>L-histidyl-[protein] + UTP = N(tele)-(5'-uridylyl)-L-histidyl-[protein] + diphosphate</text>
        <dbReference type="Rhea" id="RHEA:83891"/>
        <dbReference type="Rhea" id="RHEA-COMP:9745"/>
        <dbReference type="Rhea" id="RHEA-COMP:20239"/>
        <dbReference type="ChEBI" id="CHEBI:29979"/>
        <dbReference type="ChEBI" id="CHEBI:33019"/>
        <dbReference type="ChEBI" id="CHEBI:46398"/>
        <dbReference type="ChEBI" id="CHEBI:233474"/>
    </reaction>
</comment>
<comment type="catalytic activity">
    <reaction evidence="1">
        <text>L-seryl-[protein] + UTP = O-(5'-uridylyl)-L-seryl-[protein] + diphosphate</text>
        <dbReference type="Rhea" id="RHEA:64604"/>
        <dbReference type="Rhea" id="RHEA-COMP:9863"/>
        <dbReference type="Rhea" id="RHEA-COMP:16635"/>
        <dbReference type="ChEBI" id="CHEBI:29999"/>
        <dbReference type="ChEBI" id="CHEBI:33019"/>
        <dbReference type="ChEBI" id="CHEBI:46398"/>
        <dbReference type="ChEBI" id="CHEBI:156051"/>
    </reaction>
</comment>
<comment type="catalytic activity">
    <reaction evidence="1">
        <text>L-tyrosyl-[protein] + UTP = O-(5'-uridylyl)-L-tyrosyl-[protein] + diphosphate</text>
        <dbReference type="Rhea" id="RHEA:83887"/>
        <dbReference type="Rhea" id="RHEA-COMP:10136"/>
        <dbReference type="Rhea" id="RHEA-COMP:20238"/>
        <dbReference type="ChEBI" id="CHEBI:33019"/>
        <dbReference type="ChEBI" id="CHEBI:46398"/>
        <dbReference type="ChEBI" id="CHEBI:46858"/>
        <dbReference type="ChEBI" id="CHEBI:90602"/>
    </reaction>
</comment>
<comment type="cofactor">
    <cofactor evidence="1">
        <name>Mg(2+)</name>
        <dbReference type="ChEBI" id="CHEBI:18420"/>
    </cofactor>
    <cofactor evidence="1">
        <name>Mn(2+)</name>
        <dbReference type="ChEBI" id="CHEBI:29035"/>
    </cofactor>
</comment>
<comment type="similarity">
    <text evidence="1">Belongs to the SELO family.</text>
</comment>
<evidence type="ECO:0000255" key="1">
    <source>
        <dbReference type="HAMAP-Rule" id="MF_00692"/>
    </source>
</evidence>
<feature type="chain" id="PRO_0000121420" description="Protein nucleotidyltransferase YdiU">
    <location>
        <begin position="1"/>
        <end position="486"/>
    </location>
</feature>
<feature type="active site" description="Proton acceptor" evidence="1">
    <location>
        <position position="252"/>
    </location>
</feature>
<feature type="binding site" evidence="1">
    <location>
        <position position="90"/>
    </location>
    <ligand>
        <name>ATP</name>
        <dbReference type="ChEBI" id="CHEBI:30616"/>
    </ligand>
</feature>
<feature type="binding site" evidence="1">
    <location>
        <position position="92"/>
    </location>
    <ligand>
        <name>ATP</name>
        <dbReference type="ChEBI" id="CHEBI:30616"/>
    </ligand>
</feature>
<feature type="binding site" evidence="1">
    <location>
        <position position="93"/>
    </location>
    <ligand>
        <name>ATP</name>
        <dbReference type="ChEBI" id="CHEBI:30616"/>
    </ligand>
</feature>
<feature type="binding site" evidence="1">
    <location>
        <position position="113"/>
    </location>
    <ligand>
        <name>ATP</name>
        <dbReference type="ChEBI" id="CHEBI:30616"/>
    </ligand>
</feature>
<feature type="binding site" evidence="1">
    <location>
        <position position="125"/>
    </location>
    <ligand>
        <name>ATP</name>
        <dbReference type="ChEBI" id="CHEBI:30616"/>
    </ligand>
</feature>
<feature type="binding site" evidence="1">
    <location>
        <position position="126"/>
    </location>
    <ligand>
        <name>ATP</name>
        <dbReference type="ChEBI" id="CHEBI:30616"/>
    </ligand>
</feature>
<feature type="binding site" evidence="1">
    <location>
        <position position="176"/>
    </location>
    <ligand>
        <name>ATP</name>
        <dbReference type="ChEBI" id="CHEBI:30616"/>
    </ligand>
</feature>
<feature type="binding site" evidence="1">
    <location>
        <position position="183"/>
    </location>
    <ligand>
        <name>ATP</name>
        <dbReference type="ChEBI" id="CHEBI:30616"/>
    </ligand>
</feature>
<feature type="binding site" evidence="1">
    <location>
        <position position="253"/>
    </location>
    <ligand>
        <name>Mg(2+)</name>
        <dbReference type="ChEBI" id="CHEBI:18420"/>
    </ligand>
</feature>
<feature type="binding site" evidence="1">
    <location>
        <position position="262"/>
    </location>
    <ligand>
        <name>ATP</name>
        <dbReference type="ChEBI" id="CHEBI:30616"/>
    </ligand>
</feature>
<feature type="binding site" evidence="1">
    <location>
        <position position="262"/>
    </location>
    <ligand>
        <name>Mg(2+)</name>
        <dbReference type="ChEBI" id="CHEBI:18420"/>
    </ligand>
</feature>
<dbReference type="EC" id="2.7.7.-" evidence="1"/>
<dbReference type="EC" id="2.7.7.108" evidence="1"/>
<dbReference type="EMBL" id="AE004091">
    <property type="protein sequence ID" value="AAG08408.1"/>
    <property type="molecule type" value="Genomic_DNA"/>
</dbReference>
<dbReference type="PIR" id="C83018">
    <property type="entry name" value="C83018"/>
</dbReference>
<dbReference type="RefSeq" id="NP_253710.1">
    <property type="nucleotide sequence ID" value="NC_002516.2"/>
</dbReference>
<dbReference type="RefSeq" id="WP_003114563.1">
    <property type="nucleotide sequence ID" value="NZ_QZGE01000002.1"/>
</dbReference>
<dbReference type="SMR" id="Q9HUE6"/>
<dbReference type="FunCoup" id="Q9HUE6">
    <property type="interactions" value="563"/>
</dbReference>
<dbReference type="STRING" id="208964.PA5023"/>
<dbReference type="PaxDb" id="208964-PA5023"/>
<dbReference type="GeneID" id="881259"/>
<dbReference type="KEGG" id="pae:PA5023"/>
<dbReference type="PATRIC" id="fig|208964.12.peg.5266"/>
<dbReference type="PseudoCAP" id="PA5023"/>
<dbReference type="HOGENOM" id="CLU_010245_4_0_6"/>
<dbReference type="InParanoid" id="Q9HUE6"/>
<dbReference type="OrthoDB" id="9776281at2"/>
<dbReference type="PhylomeDB" id="Q9HUE6"/>
<dbReference type="BioCyc" id="PAER208964:G1FZ6-5139-MONOMER"/>
<dbReference type="Proteomes" id="UP000002438">
    <property type="component" value="Chromosome"/>
</dbReference>
<dbReference type="GO" id="GO:0070733">
    <property type="term" value="F:AMPylase activity"/>
    <property type="evidence" value="ECO:0000318"/>
    <property type="project" value="GO_Central"/>
</dbReference>
<dbReference type="GO" id="GO:0005524">
    <property type="term" value="F:ATP binding"/>
    <property type="evidence" value="ECO:0007669"/>
    <property type="project" value="UniProtKB-UniRule"/>
</dbReference>
<dbReference type="GO" id="GO:0000287">
    <property type="term" value="F:magnesium ion binding"/>
    <property type="evidence" value="ECO:0007669"/>
    <property type="project" value="UniProtKB-UniRule"/>
</dbReference>
<dbReference type="HAMAP" id="MF_00692">
    <property type="entry name" value="YdiU_SelO"/>
    <property type="match status" value="1"/>
</dbReference>
<dbReference type="InterPro" id="IPR003846">
    <property type="entry name" value="SelO"/>
</dbReference>
<dbReference type="NCBIfam" id="NF000658">
    <property type="entry name" value="PRK00029.1"/>
    <property type="match status" value="1"/>
</dbReference>
<dbReference type="NCBIfam" id="NF045949">
    <property type="entry name" value="PrtAdtaseSelOPseudom"/>
    <property type="match status" value="1"/>
</dbReference>
<dbReference type="PANTHER" id="PTHR32057">
    <property type="entry name" value="PROTEIN ADENYLYLTRANSFERASE SELO, MITOCHONDRIAL"/>
    <property type="match status" value="1"/>
</dbReference>
<dbReference type="PANTHER" id="PTHR32057:SF14">
    <property type="entry name" value="PROTEIN ADENYLYLTRANSFERASE SELO, MITOCHONDRIAL"/>
    <property type="match status" value="1"/>
</dbReference>
<dbReference type="Pfam" id="PF02696">
    <property type="entry name" value="SelO"/>
    <property type="match status" value="1"/>
</dbReference>
<reference key="1">
    <citation type="journal article" date="2000" name="Nature">
        <title>Complete genome sequence of Pseudomonas aeruginosa PAO1, an opportunistic pathogen.</title>
        <authorList>
            <person name="Stover C.K."/>
            <person name="Pham X.-Q.T."/>
            <person name="Erwin A.L."/>
            <person name="Mizoguchi S.D."/>
            <person name="Warrener P."/>
            <person name="Hickey M.J."/>
            <person name="Brinkman F.S.L."/>
            <person name="Hufnagle W.O."/>
            <person name="Kowalik D.J."/>
            <person name="Lagrou M."/>
            <person name="Garber R.L."/>
            <person name="Goltry L."/>
            <person name="Tolentino E."/>
            <person name="Westbrock-Wadman S."/>
            <person name="Yuan Y."/>
            <person name="Brody L.L."/>
            <person name="Coulter S.N."/>
            <person name="Folger K.R."/>
            <person name="Kas A."/>
            <person name="Larbig K."/>
            <person name="Lim R.M."/>
            <person name="Smith K.A."/>
            <person name="Spencer D.H."/>
            <person name="Wong G.K.-S."/>
            <person name="Wu Z."/>
            <person name="Paulsen I.T."/>
            <person name="Reizer J."/>
            <person name="Saier M.H. Jr."/>
            <person name="Hancock R.E.W."/>
            <person name="Lory S."/>
            <person name="Olson M.V."/>
        </authorList>
    </citation>
    <scope>NUCLEOTIDE SEQUENCE [LARGE SCALE GENOMIC DNA]</scope>
    <source>
        <strain>ATCC 15692 / DSM 22644 / CIP 104116 / JCM 14847 / LMG 12228 / 1C / PRS 101 / PAO1</strain>
    </source>
</reference>
<proteinExistence type="inferred from homology"/>
<protein>
    <recommendedName>
        <fullName evidence="1">Protein nucleotidyltransferase YdiU</fullName>
        <ecNumber evidence="1">2.7.7.-</ecNumber>
    </recommendedName>
    <alternativeName>
        <fullName evidence="1">Protein adenylyltransferase YdiU</fullName>
        <ecNumber evidence="1">2.7.7.108</ecNumber>
    </alternativeName>
    <alternativeName>
        <fullName evidence="1">Protein uridylyltransferase YdiU</fullName>
        <ecNumber evidence="1">2.7.7.-</ecNumber>
    </alternativeName>
</protein>
<accession>Q9HUE6</accession>
<gene>
    <name evidence="1" type="primary">ydiU</name>
    <name evidence="1" type="synonym">selO</name>
    <name type="ordered locus">PA5023</name>
</gene>
<keyword id="KW-0067">ATP-binding</keyword>
<keyword id="KW-0460">Magnesium</keyword>
<keyword id="KW-0464">Manganese</keyword>
<keyword id="KW-0479">Metal-binding</keyword>
<keyword id="KW-0547">Nucleotide-binding</keyword>
<keyword id="KW-0548">Nucleotidyltransferase</keyword>
<keyword id="KW-1185">Reference proteome</keyword>
<keyword id="KW-0808">Transferase</keyword>
<organism>
    <name type="scientific">Pseudomonas aeruginosa (strain ATCC 15692 / DSM 22644 / CIP 104116 / JCM 14847 / LMG 12228 / 1C / PRS 101 / PAO1)</name>
    <dbReference type="NCBI Taxonomy" id="208964"/>
    <lineage>
        <taxon>Bacteria</taxon>
        <taxon>Pseudomonadati</taxon>
        <taxon>Pseudomonadota</taxon>
        <taxon>Gammaproteobacteria</taxon>
        <taxon>Pseudomonadales</taxon>
        <taxon>Pseudomonadaceae</taxon>
        <taxon>Pseudomonas</taxon>
    </lineage>
</organism>